<comment type="catalytic activity">
    <reaction evidence="1">
        <text>L-glutamate + acetyl-CoA = N-acetyl-L-glutamate + CoA + H(+)</text>
        <dbReference type="Rhea" id="RHEA:24292"/>
        <dbReference type="ChEBI" id="CHEBI:15378"/>
        <dbReference type="ChEBI" id="CHEBI:29985"/>
        <dbReference type="ChEBI" id="CHEBI:44337"/>
        <dbReference type="ChEBI" id="CHEBI:57287"/>
        <dbReference type="ChEBI" id="CHEBI:57288"/>
        <dbReference type="EC" id="2.3.1.1"/>
    </reaction>
</comment>
<comment type="pathway">
    <text evidence="1">Amino-acid biosynthesis; L-arginine biosynthesis; N(2)-acetyl-L-ornithine from L-glutamate: step 1/4.</text>
</comment>
<comment type="subcellular location">
    <subcellularLocation>
        <location evidence="1">Cytoplasm</location>
    </subcellularLocation>
</comment>
<comment type="miscellaneous">
    <text>In bacteria which possess the bifunctional enzyme ornithine acetyltransferase/N-acetylglutamate synthase (ArgJ), ArgA fulfills an anaplerotic role.</text>
</comment>
<comment type="similarity">
    <text evidence="1">Belongs to the acetyltransferase family. ArgA subfamily.</text>
</comment>
<name>ARGA_ACTP2</name>
<proteinExistence type="inferred from homology"/>
<dbReference type="EC" id="2.3.1.1" evidence="1"/>
<dbReference type="EMBL" id="CP000569">
    <property type="protein sequence ID" value="ABN73798.1"/>
    <property type="molecule type" value="Genomic_DNA"/>
</dbReference>
<dbReference type="RefSeq" id="WP_009874720.1">
    <property type="nucleotide sequence ID" value="NC_009053.1"/>
</dbReference>
<dbReference type="SMR" id="A3N062"/>
<dbReference type="STRING" id="416269.APL_0698"/>
<dbReference type="EnsemblBacteria" id="ABN73798">
    <property type="protein sequence ID" value="ABN73798"/>
    <property type="gene ID" value="APL_0698"/>
</dbReference>
<dbReference type="KEGG" id="apl:APL_0698"/>
<dbReference type="PATRIC" id="fig|416269.6.peg.732"/>
<dbReference type="eggNOG" id="COG0548">
    <property type="taxonomic scope" value="Bacteria"/>
</dbReference>
<dbReference type="eggNOG" id="COG1246">
    <property type="taxonomic scope" value="Bacteria"/>
</dbReference>
<dbReference type="HOGENOM" id="CLU_024773_0_0_6"/>
<dbReference type="UniPathway" id="UPA00068">
    <property type="reaction ID" value="UER00106"/>
</dbReference>
<dbReference type="Proteomes" id="UP000001432">
    <property type="component" value="Chromosome"/>
</dbReference>
<dbReference type="GO" id="GO:0005737">
    <property type="term" value="C:cytoplasm"/>
    <property type="evidence" value="ECO:0007669"/>
    <property type="project" value="UniProtKB-SubCell"/>
</dbReference>
<dbReference type="GO" id="GO:0004042">
    <property type="term" value="F:L-glutamate N-acetyltransferase activity"/>
    <property type="evidence" value="ECO:0007669"/>
    <property type="project" value="UniProtKB-UniRule"/>
</dbReference>
<dbReference type="GO" id="GO:0006526">
    <property type="term" value="P:L-arginine biosynthetic process"/>
    <property type="evidence" value="ECO:0007669"/>
    <property type="project" value="UniProtKB-UniRule"/>
</dbReference>
<dbReference type="CDD" id="cd04237">
    <property type="entry name" value="AAK_NAGS-ABP"/>
    <property type="match status" value="1"/>
</dbReference>
<dbReference type="CDD" id="cd04301">
    <property type="entry name" value="NAT_SF"/>
    <property type="match status" value="1"/>
</dbReference>
<dbReference type="Gene3D" id="3.40.630.30">
    <property type="match status" value="1"/>
</dbReference>
<dbReference type="Gene3D" id="3.40.1160.10">
    <property type="entry name" value="Acetylglutamate kinase-like"/>
    <property type="match status" value="1"/>
</dbReference>
<dbReference type="HAMAP" id="MF_01105">
    <property type="entry name" value="N_acetyl_glu_synth"/>
    <property type="match status" value="1"/>
</dbReference>
<dbReference type="InterPro" id="IPR036393">
    <property type="entry name" value="AceGlu_kinase-like_sf"/>
</dbReference>
<dbReference type="InterPro" id="IPR016181">
    <property type="entry name" value="Acyl_CoA_acyltransferase"/>
</dbReference>
<dbReference type="InterPro" id="IPR001048">
    <property type="entry name" value="Asp/Glu/Uridylate_kinase"/>
</dbReference>
<dbReference type="InterPro" id="IPR000182">
    <property type="entry name" value="GNAT_dom"/>
</dbReference>
<dbReference type="InterPro" id="IPR033719">
    <property type="entry name" value="NAGS_kin"/>
</dbReference>
<dbReference type="InterPro" id="IPR010167">
    <property type="entry name" value="NH2A_AcTrfase"/>
</dbReference>
<dbReference type="NCBIfam" id="TIGR01890">
    <property type="entry name" value="N-Ac-Glu-synth"/>
    <property type="match status" value="1"/>
</dbReference>
<dbReference type="NCBIfam" id="NF003641">
    <property type="entry name" value="PRK05279.1"/>
    <property type="match status" value="1"/>
</dbReference>
<dbReference type="PANTHER" id="PTHR30602">
    <property type="entry name" value="AMINO-ACID ACETYLTRANSFERASE"/>
    <property type="match status" value="1"/>
</dbReference>
<dbReference type="PANTHER" id="PTHR30602:SF12">
    <property type="entry name" value="AMINO-ACID ACETYLTRANSFERASE NAGS1, CHLOROPLASTIC-RELATED"/>
    <property type="match status" value="1"/>
</dbReference>
<dbReference type="Pfam" id="PF00696">
    <property type="entry name" value="AA_kinase"/>
    <property type="match status" value="1"/>
</dbReference>
<dbReference type="Pfam" id="PF00583">
    <property type="entry name" value="Acetyltransf_1"/>
    <property type="match status" value="1"/>
</dbReference>
<dbReference type="PIRSF" id="PIRSF000423">
    <property type="entry name" value="ArgA"/>
    <property type="match status" value="1"/>
</dbReference>
<dbReference type="SUPFAM" id="SSF55729">
    <property type="entry name" value="Acyl-CoA N-acyltransferases (Nat)"/>
    <property type="match status" value="1"/>
</dbReference>
<dbReference type="SUPFAM" id="SSF53633">
    <property type="entry name" value="Carbamate kinase-like"/>
    <property type="match status" value="1"/>
</dbReference>
<dbReference type="PROSITE" id="PS51186">
    <property type="entry name" value="GNAT"/>
    <property type="match status" value="1"/>
</dbReference>
<reference key="1">
    <citation type="journal article" date="2008" name="J. Bacteriol.">
        <title>The complete genome sequence of Actinobacillus pleuropneumoniae L20 (serotype 5b).</title>
        <authorList>
            <person name="Foote S.J."/>
            <person name="Bosse J.T."/>
            <person name="Bouevitch A.B."/>
            <person name="Langford P.R."/>
            <person name="Young N.M."/>
            <person name="Nash J.H.E."/>
        </authorList>
    </citation>
    <scope>NUCLEOTIDE SEQUENCE [LARGE SCALE GENOMIC DNA]</scope>
    <source>
        <strain>L20</strain>
    </source>
</reference>
<feature type="chain" id="PRO_1000084807" description="Amino-acid acetyltransferase">
    <location>
        <begin position="1"/>
        <end position="437"/>
    </location>
</feature>
<feature type="domain" description="N-acetyltransferase" evidence="1">
    <location>
        <begin position="289"/>
        <end position="429"/>
    </location>
</feature>
<gene>
    <name evidence="1" type="primary">argA</name>
    <name type="ordered locus">APL_0698</name>
</gene>
<accession>A3N062</accession>
<organism>
    <name type="scientific">Actinobacillus pleuropneumoniae serotype 5b (strain L20)</name>
    <dbReference type="NCBI Taxonomy" id="416269"/>
    <lineage>
        <taxon>Bacteria</taxon>
        <taxon>Pseudomonadati</taxon>
        <taxon>Pseudomonadota</taxon>
        <taxon>Gammaproteobacteria</taxon>
        <taxon>Pasteurellales</taxon>
        <taxon>Pasteurellaceae</taxon>
        <taxon>Actinobacillus</taxon>
    </lineage>
</organism>
<keyword id="KW-0012">Acyltransferase</keyword>
<keyword id="KW-0028">Amino-acid biosynthesis</keyword>
<keyword id="KW-0055">Arginine biosynthesis</keyword>
<keyword id="KW-0963">Cytoplasm</keyword>
<keyword id="KW-1185">Reference proteome</keyword>
<keyword id="KW-0808">Transferase</keyword>
<evidence type="ECO:0000255" key="1">
    <source>
        <dbReference type="HAMAP-Rule" id="MF_01105"/>
    </source>
</evidence>
<sequence length="437" mass="49292">MRNTELVQWFRQSTPYVNMHREKTFVIMLDGNAIAHPNFINITNDIGLLHSLGIKLVIVFGARCQIDELLAKNQMSSTYHKHIRITDSKTLEVVKQAVGGLHYDIFSRLSLRLPNSPVLNVVSSNAVLAQPLGVIDGVDYGLSGKIRRINIEGIQQQLAQDAIVVIGPIAPSVTGEMFNLPFEEIATQIAIKLKADKLIGFCDQQGILDSEGNVLSDLHPREAKRYLTQFIESGQYHHSAARFLQAAIEACHAGIKRSHLLSYKEDGSLLQELFSRDGIGTQLSEESSENIRLATSFDIPGLLNLIRPLEEQGILVKRSREQLEMEISNYTIIERDGIVIACAALNHYPQEKMAEMACVAVHPDYRDSSRGDVLLEAIKRRAYKLQVEKLFVLTTRTTQWFQERGFVLSTTDDLPKEKREHYNYQRMSKILILDLGQ</sequence>
<protein>
    <recommendedName>
        <fullName evidence="1">Amino-acid acetyltransferase</fullName>
        <ecNumber evidence="1">2.3.1.1</ecNumber>
    </recommendedName>
    <alternativeName>
        <fullName evidence="1">N-acetylglutamate synthase</fullName>
        <shortName evidence="1">AGS</shortName>
        <shortName evidence="1">NAGS</shortName>
    </alternativeName>
</protein>